<reference key="1">
    <citation type="journal article" date="2007" name="J. Bacteriol.">
        <title>Genome-wide transcriptional changes in Streptococcus gordonii in response to competence signaling peptide.</title>
        <authorList>
            <person name="Vickerman M.M."/>
            <person name="Iobst S."/>
            <person name="Jesionowski A.M."/>
            <person name="Gill S.R."/>
        </authorList>
    </citation>
    <scope>NUCLEOTIDE SEQUENCE [LARGE SCALE GENOMIC DNA]</scope>
    <source>
        <strain>Challis / ATCC 35105 / BCRC 15272 / CH1 / DL1 / V288</strain>
    </source>
</reference>
<organism>
    <name type="scientific">Streptococcus gordonii (strain Challis / ATCC 35105 / BCRC 15272 / CH1 / DL1 / V288)</name>
    <dbReference type="NCBI Taxonomy" id="467705"/>
    <lineage>
        <taxon>Bacteria</taxon>
        <taxon>Bacillati</taxon>
        <taxon>Bacillota</taxon>
        <taxon>Bacilli</taxon>
        <taxon>Lactobacillales</taxon>
        <taxon>Streptococcaceae</taxon>
        <taxon>Streptococcus</taxon>
    </lineage>
</organism>
<evidence type="ECO:0000255" key="1">
    <source>
        <dbReference type="HAMAP-Rule" id="MF_00036"/>
    </source>
</evidence>
<accession>A8AYI8</accession>
<protein>
    <recommendedName>
        <fullName evidence="1">Alanine--tRNA ligase</fullName>
        <ecNumber evidence="1">6.1.1.7</ecNumber>
    </recommendedName>
    <alternativeName>
        <fullName evidence="1">Alanyl-tRNA synthetase</fullName>
        <shortName evidence="1">AlaRS</shortName>
    </alternativeName>
</protein>
<keyword id="KW-0030">Aminoacyl-tRNA synthetase</keyword>
<keyword id="KW-0067">ATP-binding</keyword>
<keyword id="KW-0963">Cytoplasm</keyword>
<keyword id="KW-0436">Ligase</keyword>
<keyword id="KW-0479">Metal-binding</keyword>
<keyword id="KW-0547">Nucleotide-binding</keyword>
<keyword id="KW-0648">Protein biosynthesis</keyword>
<keyword id="KW-1185">Reference proteome</keyword>
<keyword id="KW-0694">RNA-binding</keyword>
<keyword id="KW-0820">tRNA-binding</keyword>
<keyword id="KW-0862">Zinc</keyword>
<comment type="function">
    <text evidence="1">Catalyzes the attachment of alanine to tRNA(Ala) in a two-step reaction: alanine is first activated by ATP to form Ala-AMP and then transferred to the acceptor end of tRNA(Ala). Also edits incorrectly charged Ser-tRNA(Ala) and Gly-tRNA(Ala) via its editing domain.</text>
</comment>
<comment type="catalytic activity">
    <reaction evidence="1">
        <text>tRNA(Ala) + L-alanine + ATP = L-alanyl-tRNA(Ala) + AMP + diphosphate</text>
        <dbReference type="Rhea" id="RHEA:12540"/>
        <dbReference type="Rhea" id="RHEA-COMP:9657"/>
        <dbReference type="Rhea" id="RHEA-COMP:9923"/>
        <dbReference type="ChEBI" id="CHEBI:30616"/>
        <dbReference type="ChEBI" id="CHEBI:33019"/>
        <dbReference type="ChEBI" id="CHEBI:57972"/>
        <dbReference type="ChEBI" id="CHEBI:78442"/>
        <dbReference type="ChEBI" id="CHEBI:78497"/>
        <dbReference type="ChEBI" id="CHEBI:456215"/>
        <dbReference type="EC" id="6.1.1.7"/>
    </reaction>
</comment>
<comment type="cofactor">
    <cofactor evidence="1">
        <name>Zn(2+)</name>
        <dbReference type="ChEBI" id="CHEBI:29105"/>
    </cofactor>
    <text evidence="1">Binds 1 zinc ion per subunit.</text>
</comment>
<comment type="subcellular location">
    <subcellularLocation>
        <location evidence="1">Cytoplasm</location>
    </subcellularLocation>
</comment>
<comment type="domain">
    <text evidence="1">Consists of three domains; the N-terminal catalytic domain, the editing domain and the C-terminal C-Ala domain. The editing domain removes incorrectly charged amino acids, while the C-Ala domain, along with tRNA(Ala), serves as a bridge to cooperatively bring together the editing and aminoacylation centers thus stimulating deacylation of misacylated tRNAs.</text>
</comment>
<comment type="similarity">
    <text evidence="1">Belongs to the class-II aminoacyl-tRNA synthetase family.</text>
</comment>
<dbReference type="EC" id="6.1.1.7" evidence="1"/>
<dbReference type="EMBL" id="CP000725">
    <property type="protein sequence ID" value="ABV09680.1"/>
    <property type="molecule type" value="Genomic_DNA"/>
</dbReference>
<dbReference type="RefSeq" id="WP_012130635.1">
    <property type="nucleotide sequence ID" value="NC_009785.1"/>
</dbReference>
<dbReference type="SMR" id="A8AYI8"/>
<dbReference type="STRING" id="467705.SGO_1570"/>
<dbReference type="KEGG" id="sgo:SGO_1570"/>
<dbReference type="eggNOG" id="COG0013">
    <property type="taxonomic scope" value="Bacteria"/>
</dbReference>
<dbReference type="HOGENOM" id="CLU_004485_1_1_9"/>
<dbReference type="Proteomes" id="UP000001131">
    <property type="component" value="Chromosome"/>
</dbReference>
<dbReference type="GO" id="GO:0005829">
    <property type="term" value="C:cytosol"/>
    <property type="evidence" value="ECO:0007669"/>
    <property type="project" value="TreeGrafter"/>
</dbReference>
<dbReference type="GO" id="GO:0004813">
    <property type="term" value="F:alanine-tRNA ligase activity"/>
    <property type="evidence" value="ECO:0007669"/>
    <property type="project" value="UniProtKB-UniRule"/>
</dbReference>
<dbReference type="GO" id="GO:0002161">
    <property type="term" value="F:aminoacyl-tRNA deacylase activity"/>
    <property type="evidence" value="ECO:0007669"/>
    <property type="project" value="TreeGrafter"/>
</dbReference>
<dbReference type="GO" id="GO:0005524">
    <property type="term" value="F:ATP binding"/>
    <property type="evidence" value="ECO:0007669"/>
    <property type="project" value="UniProtKB-UniRule"/>
</dbReference>
<dbReference type="GO" id="GO:0140096">
    <property type="term" value="F:catalytic activity, acting on a protein"/>
    <property type="evidence" value="ECO:0007669"/>
    <property type="project" value="UniProtKB-ARBA"/>
</dbReference>
<dbReference type="GO" id="GO:0016740">
    <property type="term" value="F:transferase activity"/>
    <property type="evidence" value="ECO:0007669"/>
    <property type="project" value="UniProtKB-ARBA"/>
</dbReference>
<dbReference type="GO" id="GO:0000049">
    <property type="term" value="F:tRNA binding"/>
    <property type="evidence" value="ECO:0007669"/>
    <property type="project" value="UniProtKB-KW"/>
</dbReference>
<dbReference type="GO" id="GO:0008270">
    <property type="term" value="F:zinc ion binding"/>
    <property type="evidence" value="ECO:0007669"/>
    <property type="project" value="UniProtKB-UniRule"/>
</dbReference>
<dbReference type="GO" id="GO:0006419">
    <property type="term" value="P:alanyl-tRNA aminoacylation"/>
    <property type="evidence" value="ECO:0007669"/>
    <property type="project" value="UniProtKB-UniRule"/>
</dbReference>
<dbReference type="CDD" id="cd00673">
    <property type="entry name" value="AlaRS_core"/>
    <property type="match status" value="1"/>
</dbReference>
<dbReference type="FunFam" id="3.10.310.40:FF:000001">
    <property type="entry name" value="Alanine--tRNA ligase"/>
    <property type="match status" value="1"/>
</dbReference>
<dbReference type="FunFam" id="3.30.54.20:FF:000001">
    <property type="entry name" value="Alanine--tRNA ligase"/>
    <property type="match status" value="1"/>
</dbReference>
<dbReference type="FunFam" id="3.30.930.10:FF:000046">
    <property type="entry name" value="Alanine--tRNA ligase"/>
    <property type="match status" value="1"/>
</dbReference>
<dbReference type="FunFam" id="3.30.980.10:FF:000004">
    <property type="entry name" value="Alanine--tRNA ligase, cytoplasmic"/>
    <property type="match status" value="1"/>
</dbReference>
<dbReference type="Gene3D" id="2.40.30.130">
    <property type="match status" value="1"/>
</dbReference>
<dbReference type="Gene3D" id="3.10.310.40">
    <property type="match status" value="1"/>
</dbReference>
<dbReference type="Gene3D" id="3.30.54.20">
    <property type="match status" value="1"/>
</dbReference>
<dbReference type="Gene3D" id="6.10.250.550">
    <property type="match status" value="1"/>
</dbReference>
<dbReference type="Gene3D" id="3.30.930.10">
    <property type="entry name" value="Bira Bifunctional Protein, Domain 2"/>
    <property type="match status" value="1"/>
</dbReference>
<dbReference type="Gene3D" id="3.30.980.10">
    <property type="entry name" value="Threonyl-trna Synthetase, Chain A, domain 2"/>
    <property type="match status" value="1"/>
</dbReference>
<dbReference type="HAMAP" id="MF_00036_B">
    <property type="entry name" value="Ala_tRNA_synth_B"/>
    <property type="match status" value="1"/>
</dbReference>
<dbReference type="InterPro" id="IPR045864">
    <property type="entry name" value="aa-tRNA-synth_II/BPL/LPL"/>
</dbReference>
<dbReference type="InterPro" id="IPR002318">
    <property type="entry name" value="Ala-tRNA-lgiase_IIc"/>
</dbReference>
<dbReference type="InterPro" id="IPR018162">
    <property type="entry name" value="Ala-tRNA-ligase_IIc_anticod-bd"/>
</dbReference>
<dbReference type="InterPro" id="IPR018165">
    <property type="entry name" value="Ala-tRNA-synth_IIc_core"/>
</dbReference>
<dbReference type="InterPro" id="IPR018164">
    <property type="entry name" value="Ala-tRNA-synth_IIc_N"/>
</dbReference>
<dbReference type="InterPro" id="IPR050058">
    <property type="entry name" value="Ala-tRNA_ligase"/>
</dbReference>
<dbReference type="InterPro" id="IPR023033">
    <property type="entry name" value="Ala_tRNA_ligase_euk/bac"/>
</dbReference>
<dbReference type="InterPro" id="IPR003156">
    <property type="entry name" value="DHHA1_dom"/>
</dbReference>
<dbReference type="InterPro" id="IPR018163">
    <property type="entry name" value="Thr/Ala-tRNA-synth_IIc_edit"/>
</dbReference>
<dbReference type="InterPro" id="IPR009000">
    <property type="entry name" value="Transl_B-barrel_sf"/>
</dbReference>
<dbReference type="InterPro" id="IPR012947">
    <property type="entry name" value="tRNA_SAD"/>
</dbReference>
<dbReference type="NCBIfam" id="TIGR00344">
    <property type="entry name" value="alaS"/>
    <property type="match status" value="1"/>
</dbReference>
<dbReference type="PANTHER" id="PTHR11777:SF9">
    <property type="entry name" value="ALANINE--TRNA LIGASE, CYTOPLASMIC"/>
    <property type="match status" value="1"/>
</dbReference>
<dbReference type="PANTHER" id="PTHR11777">
    <property type="entry name" value="ALANYL-TRNA SYNTHETASE"/>
    <property type="match status" value="1"/>
</dbReference>
<dbReference type="Pfam" id="PF02272">
    <property type="entry name" value="DHHA1"/>
    <property type="match status" value="1"/>
</dbReference>
<dbReference type="Pfam" id="PF01411">
    <property type="entry name" value="tRNA-synt_2c"/>
    <property type="match status" value="1"/>
</dbReference>
<dbReference type="Pfam" id="PF07973">
    <property type="entry name" value="tRNA_SAD"/>
    <property type="match status" value="1"/>
</dbReference>
<dbReference type="PRINTS" id="PR00980">
    <property type="entry name" value="TRNASYNTHALA"/>
</dbReference>
<dbReference type="SMART" id="SM00863">
    <property type="entry name" value="tRNA_SAD"/>
    <property type="match status" value="1"/>
</dbReference>
<dbReference type="SUPFAM" id="SSF55681">
    <property type="entry name" value="Class II aaRS and biotin synthetases"/>
    <property type="match status" value="1"/>
</dbReference>
<dbReference type="SUPFAM" id="SSF101353">
    <property type="entry name" value="Putative anticodon-binding domain of alanyl-tRNA synthetase (AlaRS)"/>
    <property type="match status" value="1"/>
</dbReference>
<dbReference type="SUPFAM" id="SSF55186">
    <property type="entry name" value="ThrRS/AlaRS common domain"/>
    <property type="match status" value="1"/>
</dbReference>
<dbReference type="SUPFAM" id="SSF50447">
    <property type="entry name" value="Translation proteins"/>
    <property type="match status" value="1"/>
</dbReference>
<dbReference type="PROSITE" id="PS50860">
    <property type="entry name" value="AA_TRNA_LIGASE_II_ALA"/>
    <property type="match status" value="1"/>
</dbReference>
<name>SYA_STRGC</name>
<feature type="chain" id="PRO_0000347818" description="Alanine--tRNA ligase">
    <location>
        <begin position="1"/>
        <end position="872"/>
    </location>
</feature>
<feature type="binding site" evidence="1">
    <location>
        <position position="567"/>
    </location>
    <ligand>
        <name>Zn(2+)</name>
        <dbReference type="ChEBI" id="CHEBI:29105"/>
    </ligand>
</feature>
<feature type="binding site" evidence="1">
    <location>
        <position position="571"/>
    </location>
    <ligand>
        <name>Zn(2+)</name>
        <dbReference type="ChEBI" id="CHEBI:29105"/>
    </ligand>
</feature>
<feature type="binding site" evidence="1">
    <location>
        <position position="669"/>
    </location>
    <ligand>
        <name>Zn(2+)</name>
        <dbReference type="ChEBI" id="CHEBI:29105"/>
    </ligand>
</feature>
<feature type="binding site" evidence="1">
    <location>
        <position position="673"/>
    </location>
    <ligand>
        <name>Zn(2+)</name>
        <dbReference type="ChEBI" id="CHEBI:29105"/>
    </ligand>
</feature>
<proteinExistence type="inferred from homology"/>
<sequence>MKQMSSAQIRQMWLDFWASKGHSVEPSVSLVPVNDPTLLWINSGVATLKKYFDGTIIPENPRITNAQKAIRTNDIENVGKTARHHTMFEMLGNFSIGDYFRDEAITWAYELLTSPEWFDFPAEKLYMTYYPDDKDSYNRWIEVGVDPSHLIPIEDNFWEIGAGPSGPDTEIFFDRGEAFDPENIGLRLLAEDIENDRYIEIWNIVLSQFNADPAVPRSEYKELPHKNIDTGAGLERLVAVIQGAKTNFETDLFMPIIREVEKLSGKVYDQDGDNMSFKVIADHIRSLSFAIGDGALPGNEGRGYVLRRLLRGASMHGQKLGINEPFLYKLVPTVGKIMESYYPEVLEKRDFIEKIVKSEEESFARTLHSGQHFAETIVADLKAKGQNVIAGQDVFKLYDTYGFPVELTEEIAEEAGMTVDREGFEVAMKEQQERARASAVKGGSMGMQNETLQNITVESVFNYNASQLPSKLVAIVAENAEVEAVSEGTASLIFAETPFYAEMGGQVADHGQILDATGNLVATVTDVQKAPNGQALHTVEVLAPLALNQEYTLAIDTNRRHRVMKNHTATHLLHAALHNILGHHATQAGSLNEVEFLRFDFTHFQAVTPEELRAIEQQVNEKIWEAIAVETVETDIDTAKEMGAMALFGEKYGKEVRVVTIGDYSVELCGGTHVGNTSEIGLFKIVKEEGIGSGTRRILAVTGKEAFEAYREQEDALKAVAATLKAPQLKEVPHKVEGLQEQLRQLQKENAELKEKAAAAAAGDVFKDVKEVNGHRYIVSQVSVSDAGALRTFADNWKQKDYSDVLVLVAAIGDKVNALVASKTKDIHAGNLVKELAPIVDGRGGGKPDMAMAGGSNQAKIQELLEAVAGKL</sequence>
<gene>
    <name evidence="1" type="primary">alaS</name>
    <name type="ordered locus">SGO_1570</name>
</gene>